<keyword id="KW-1003">Cell membrane</keyword>
<keyword id="KW-0963">Cytoplasm</keyword>
<keyword id="KW-0967">Endosome</keyword>
<keyword id="KW-0333">Golgi apparatus</keyword>
<keyword id="KW-0342">GTP-binding</keyword>
<keyword id="KW-0449">Lipoprotein</keyword>
<keyword id="KW-0472">Membrane</keyword>
<keyword id="KW-0547">Nucleotide-binding</keyword>
<keyword id="KW-0539">Nucleus</keyword>
<keyword id="KW-0597">Phosphoprotein</keyword>
<keyword id="KW-0636">Prenylation</keyword>
<keyword id="KW-0653">Protein transport</keyword>
<keyword id="KW-1185">Reference proteome</keyword>
<keyword id="KW-0813">Transport</keyword>
<feature type="chain" id="PRO_0000121310" description="GTP-binding protein ypt3">
    <location>
        <begin position="1"/>
        <end position="214"/>
    </location>
</feature>
<feature type="short sequence motif" description="Effector region" evidence="7">
    <location>
        <begin position="39"/>
        <end position="47"/>
    </location>
</feature>
<feature type="binding site" evidence="1">
    <location>
        <begin position="17"/>
        <end position="24"/>
    </location>
    <ligand>
        <name>GTP</name>
        <dbReference type="ChEBI" id="CHEBI:37565"/>
    </ligand>
</feature>
<feature type="binding site" evidence="1">
    <location>
        <begin position="65"/>
        <end position="69"/>
    </location>
    <ligand>
        <name>GTP</name>
        <dbReference type="ChEBI" id="CHEBI:37565"/>
    </ligand>
</feature>
<feature type="binding site" evidence="1">
    <location>
        <begin position="123"/>
        <end position="126"/>
    </location>
    <ligand>
        <name>GTP</name>
        <dbReference type="ChEBI" id="CHEBI:37565"/>
    </ligand>
</feature>
<feature type="site" description="Not methylated" evidence="3">
    <location>
        <position position="214"/>
    </location>
</feature>
<feature type="modified residue" description="Phosphothreonine" evidence="6">
    <location>
        <position position="42"/>
    </location>
</feature>
<feature type="lipid moiety-binding region" description="S-geranylgeranyl cysteine" evidence="3">
    <location>
        <position position="213"/>
    </location>
</feature>
<feature type="lipid moiety-binding region" description="S-geranylgeranyl cysteine" evidence="3">
    <location>
        <position position="214"/>
    </location>
</feature>
<feature type="mutagenesis site" description="Growth inhibited." evidence="2">
    <original>S</original>
    <variation>N</variation>
    <location>
        <position position="24"/>
    </location>
</feature>
<feature type="mutagenesis site" description="Localizes to cytoplasm and nucleus." evidence="2">
    <original>R</original>
    <variation>H</variation>
    <location>
        <position position="29"/>
    </location>
</feature>
<sequence length="214" mass="23861">MCQEDEYDYLFKTVLIGDSGVGKSNLLMRFTRNEFNIESKSTIGVEFATRNIVLDNKKIKAQIWDTAGQERYRAITSAYYRGAVGALIVYDITKQSSFDNVGRWLKELREHADSNIVIMLVGNKTDLLHLRAVSTEEAQAFAAENNLSFIETSAMDASNVEEAFQTVLTEIFRIVSNRSLEAGDDGVHPTAGQTLNIAPTMNDLNKKKSSSQCC</sequence>
<proteinExistence type="evidence at protein level"/>
<accession>P17610</accession>
<comment type="function">
    <text evidence="2 4">Has a role in retrograde traffricking of proteins from the endosome to the Golgi. Involved in the secretory pathway where it has a role in acid phosphatase secretion.</text>
</comment>
<comment type="subcellular location">
    <subcellularLocation>
        <location evidence="7">Cell membrane</location>
        <topology evidence="8">Lipid-anchor</topology>
        <orientation evidence="7">Cytoplasmic side</orientation>
    </subcellularLocation>
    <subcellularLocation>
        <location evidence="2 4">Endosome membrane</location>
        <topology evidence="8">Lipid-anchor</topology>
    </subcellularLocation>
    <subcellularLocation>
        <location evidence="2 4">Golgi apparatus membrane</location>
        <topology evidence="8">Lipid-anchor</topology>
    </subcellularLocation>
    <subcellularLocation>
        <location evidence="2">Cytoplasm</location>
    </subcellularLocation>
    <subcellularLocation>
        <location evidence="5">Nucleus</location>
    </subcellularLocation>
</comment>
<comment type="similarity">
    <text evidence="7">Belongs to the small GTPase superfamily. Rab family.</text>
</comment>
<name>YPT3_SCHPO</name>
<dbReference type="EMBL" id="X52100">
    <property type="protein sequence ID" value="CAA36320.1"/>
    <property type="molecule type" value="Genomic_DNA"/>
</dbReference>
<dbReference type="EMBL" id="X52732">
    <property type="protein sequence ID" value="CAA36946.1"/>
    <property type="molecule type" value="mRNA"/>
</dbReference>
<dbReference type="EMBL" id="CU329670">
    <property type="protein sequence ID" value="CAA92383.1"/>
    <property type="molecule type" value="Genomic_DNA"/>
</dbReference>
<dbReference type="PIR" id="S10026">
    <property type="entry name" value="S10026"/>
</dbReference>
<dbReference type="RefSeq" id="NP_593667.1">
    <property type="nucleotide sequence ID" value="NM_001019099.2"/>
</dbReference>
<dbReference type="SMR" id="P17610"/>
<dbReference type="BioGRID" id="278693">
    <property type="interactions" value="13"/>
</dbReference>
<dbReference type="FunCoup" id="P17610">
    <property type="interactions" value="569"/>
</dbReference>
<dbReference type="STRING" id="284812.P17610"/>
<dbReference type="iPTMnet" id="P17610"/>
<dbReference type="SwissPalm" id="P17610"/>
<dbReference type="PaxDb" id="4896-SPAC18G6.03.1"/>
<dbReference type="EnsemblFungi" id="SPAC18G6.03.1">
    <property type="protein sequence ID" value="SPAC18G6.03.1:pep"/>
    <property type="gene ID" value="SPAC18G6.03"/>
</dbReference>
<dbReference type="PomBase" id="SPAC18G6.03">
    <property type="gene designation" value="ypt3"/>
</dbReference>
<dbReference type="VEuPathDB" id="FungiDB:SPAC18G6.03"/>
<dbReference type="eggNOG" id="KOG0087">
    <property type="taxonomic scope" value="Eukaryota"/>
</dbReference>
<dbReference type="HOGENOM" id="CLU_041217_23_0_1"/>
<dbReference type="InParanoid" id="P17610"/>
<dbReference type="OMA" id="ITAIYQM"/>
<dbReference type="PhylomeDB" id="P17610"/>
<dbReference type="Reactome" id="R-SPO-5620912">
    <property type="pathway name" value="Anchoring of the basal body to the plasma membrane"/>
</dbReference>
<dbReference type="Reactome" id="R-SPO-8873719">
    <property type="pathway name" value="RAB geranylgeranylation"/>
</dbReference>
<dbReference type="PRO" id="PR:P17610"/>
<dbReference type="Proteomes" id="UP000002485">
    <property type="component" value="Chromosome I"/>
</dbReference>
<dbReference type="GO" id="GO:0090689">
    <property type="term" value="C:cleavage furrow leading edge"/>
    <property type="evidence" value="ECO:0000314"/>
    <property type="project" value="PomBase"/>
</dbReference>
<dbReference type="GO" id="GO:0090726">
    <property type="term" value="C:cortical dynamic polarity patch"/>
    <property type="evidence" value="ECO:0000314"/>
    <property type="project" value="PomBase"/>
</dbReference>
<dbReference type="GO" id="GO:0005737">
    <property type="term" value="C:cytoplasm"/>
    <property type="evidence" value="ECO:0000314"/>
    <property type="project" value="CACAO"/>
</dbReference>
<dbReference type="GO" id="GO:0005829">
    <property type="term" value="C:cytosol"/>
    <property type="evidence" value="ECO:0007005"/>
    <property type="project" value="PomBase"/>
</dbReference>
<dbReference type="GO" id="GO:0010008">
    <property type="term" value="C:endosome membrane"/>
    <property type="evidence" value="ECO:0007669"/>
    <property type="project" value="UniProtKB-SubCell"/>
</dbReference>
<dbReference type="GO" id="GO:0005794">
    <property type="term" value="C:Golgi apparatus"/>
    <property type="evidence" value="ECO:0000318"/>
    <property type="project" value="GO_Central"/>
</dbReference>
<dbReference type="GO" id="GO:0000139">
    <property type="term" value="C:Golgi membrane"/>
    <property type="evidence" value="ECO:0007669"/>
    <property type="project" value="UniProtKB-SubCell"/>
</dbReference>
<dbReference type="GO" id="GO:0035838">
    <property type="term" value="C:growing cell tip"/>
    <property type="evidence" value="ECO:0000314"/>
    <property type="project" value="CACAO"/>
</dbReference>
<dbReference type="GO" id="GO:0090619">
    <property type="term" value="C:meiotic spindle pole"/>
    <property type="evidence" value="ECO:0000314"/>
    <property type="project" value="PomBase"/>
</dbReference>
<dbReference type="GO" id="GO:0035974">
    <property type="term" value="C:meiotic spindle pole body"/>
    <property type="evidence" value="ECO:0000314"/>
    <property type="project" value="CACAO"/>
</dbReference>
<dbReference type="GO" id="GO:0005634">
    <property type="term" value="C:nucleus"/>
    <property type="evidence" value="ECO:0007005"/>
    <property type="project" value="PomBase"/>
</dbReference>
<dbReference type="GO" id="GO:0005628">
    <property type="term" value="C:prospore membrane"/>
    <property type="evidence" value="ECO:0000314"/>
    <property type="project" value="PomBase"/>
</dbReference>
<dbReference type="GO" id="GO:0055037">
    <property type="term" value="C:recycling endosome"/>
    <property type="evidence" value="ECO:0000318"/>
    <property type="project" value="GO_Central"/>
</dbReference>
<dbReference type="GO" id="GO:0005525">
    <property type="term" value="F:GTP binding"/>
    <property type="evidence" value="ECO:0000318"/>
    <property type="project" value="GO_Central"/>
</dbReference>
<dbReference type="GO" id="GO:0003924">
    <property type="term" value="F:GTPase activity"/>
    <property type="evidence" value="ECO:0000318"/>
    <property type="project" value="GO_Central"/>
</dbReference>
<dbReference type="GO" id="GO:0032120">
    <property type="term" value="P:ascospore-type prospore membrane formation"/>
    <property type="evidence" value="ECO:0000315"/>
    <property type="project" value="PomBase"/>
</dbReference>
<dbReference type="GO" id="GO:0099638">
    <property type="term" value="P:endosome to plasma membrane protein transport"/>
    <property type="evidence" value="ECO:0000315"/>
    <property type="project" value="PomBase"/>
</dbReference>
<dbReference type="GO" id="GO:0006887">
    <property type="term" value="P:exocytosis"/>
    <property type="evidence" value="ECO:0000315"/>
    <property type="project" value="PomBase"/>
</dbReference>
<dbReference type="GO" id="GO:0061796">
    <property type="term" value="P:membrane addition at site of mitotic cytokinesis"/>
    <property type="evidence" value="ECO:0000269"/>
    <property type="project" value="PomBase"/>
</dbReference>
<dbReference type="GO" id="GO:0000281">
    <property type="term" value="P:mitotic cytokinesis"/>
    <property type="evidence" value="ECO:0000315"/>
    <property type="project" value="PomBase"/>
</dbReference>
<dbReference type="GO" id="GO:1990896">
    <property type="term" value="P:protein localization to cell cortex of cell tip"/>
    <property type="evidence" value="ECO:0000315"/>
    <property type="project" value="PomBase"/>
</dbReference>
<dbReference type="GO" id="GO:1902441">
    <property type="term" value="P:protein localization to meiotic spindle pole body"/>
    <property type="evidence" value="ECO:0000315"/>
    <property type="project" value="PomBase"/>
</dbReference>
<dbReference type="GO" id="GO:0042144">
    <property type="term" value="P:vacuole fusion, non-autophagic"/>
    <property type="evidence" value="ECO:0000315"/>
    <property type="project" value="PomBase"/>
</dbReference>
<dbReference type="CDD" id="cd01868">
    <property type="entry name" value="Rab11_like"/>
    <property type="match status" value="1"/>
</dbReference>
<dbReference type="FunFam" id="3.40.50.300:FF:000067">
    <property type="entry name" value="ras-related protein RABA1f"/>
    <property type="match status" value="1"/>
</dbReference>
<dbReference type="Gene3D" id="3.40.50.300">
    <property type="entry name" value="P-loop containing nucleotide triphosphate hydrolases"/>
    <property type="match status" value="1"/>
</dbReference>
<dbReference type="InterPro" id="IPR027417">
    <property type="entry name" value="P-loop_NTPase"/>
</dbReference>
<dbReference type="InterPro" id="IPR050209">
    <property type="entry name" value="Rab_GTPases_membrane_traffic"/>
</dbReference>
<dbReference type="InterPro" id="IPR005225">
    <property type="entry name" value="Small_GTP-bd"/>
</dbReference>
<dbReference type="InterPro" id="IPR001806">
    <property type="entry name" value="Small_GTPase"/>
</dbReference>
<dbReference type="NCBIfam" id="TIGR00231">
    <property type="entry name" value="small_GTP"/>
    <property type="match status" value="1"/>
</dbReference>
<dbReference type="PANTHER" id="PTHR47979">
    <property type="entry name" value="DRAB11-RELATED"/>
    <property type="match status" value="1"/>
</dbReference>
<dbReference type="Pfam" id="PF00071">
    <property type="entry name" value="Ras"/>
    <property type="match status" value="1"/>
</dbReference>
<dbReference type="PRINTS" id="PR00449">
    <property type="entry name" value="RASTRNSFRMNG"/>
</dbReference>
<dbReference type="SMART" id="SM00175">
    <property type="entry name" value="RAB"/>
    <property type="match status" value="1"/>
</dbReference>
<dbReference type="SMART" id="SM00176">
    <property type="entry name" value="RAN"/>
    <property type="match status" value="1"/>
</dbReference>
<dbReference type="SMART" id="SM00173">
    <property type="entry name" value="RAS"/>
    <property type="match status" value="1"/>
</dbReference>
<dbReference type="SMART" id="SM00174">
    <property type="entry name" value="RHO"/>
    <property type="match status" value="1"/>
</dbReference>
<dbReference type="SUPFAM" id="SSF52540">
    <property type="entry name" value="P-loop containing nucleoside triphosphate hydrolases"/>
    <property type="match status" value="1"/>
</dbReference>
<dbReference type="PROSITE" id="PS51419">
    <property type="entry name" value="RAB"/>
    <property type="match status" value="1"/>
</dbReference>
<reference key="1">
    <citation type="journal article" date="1990" name="EMBO J.">
        <title>Identification of ras-related, YPT family genes in Schizosaccharomyces pombe.</title>
        <authorList>
            <person name="Miyake S."/>
            <person name="Yamamoto M."/>
        </authorList>
    </citation>
    <scope>NUCLEOTIDE SEQUENCE [GENOMIC DNA]</scope>
</reference>
<reference key="2">
    <citation type="journal article" date="1990" name="Nucleic Acids Res.">
        <title>Novel YPT1-related genes from Schizosaccharomyces pombe.</title>
        <authorList>
            <person name="Fawell E."/>
            <person name="Hook S."/>
            <person name="Sweet D."/>
            <person name="Armstrong J."/>
        </authorList>
    </citation>
    <scope>NUCLEOTIDE SEQUENCE [MRNA]</scope>
</reference>
<reference key="3">
    <citation type="journal article" date="2002" name="Mol. Biol. Cell">
        <title>Role of the Rab GTP-binding protein Ypt3 in the fission yeast exocytic pathway and its connection to calcineurin function.</title>
        <authorList>
            <person name="Cheng H."/>
            <person name="Sugiura R."/>
            <person name="Wu W."/>
            <person name="Fujita M."/>
            <person name="Lu Y."/>
            <person name="Sio S.O."/>
            <person name="Kawai R."/>
            <person name="Takegawa K."/>
            <person name="Shuntoh H."/>
            <person name="Kuno T."/>
        </authorList>
    </citation>
    <scope>NUCLEOTIDE SEQUENCE [GENOMIC DNA]</scope>
    <scope>FUNCTION</scope>
    <scope>SUBCELLULAR LOCATION</scope>
    <scope>MUTAGENESIS OF SER-24 AND ARG-29</scope>
</reference>
<reference key="4">
    <citation type="journal article" date="2002" name="Nature">
        <title>The genome sequence of Schizosaccharomyces pombe.</title>
        <authorList>
            <person name="Wood V."/>
            <person name="Gwilliam R."/>
            <person name="Rajandream M.A."/>
            <person name="Lyne M.H."/>
            <person name="Lyne R."/>
            <person name="Stewart A."/>
            <person name="Sgouros J.G."/>
            <person name="Peat N."/>
            <person name="Hayles J."/>
            <person name="Baker S.G."/>
            <person name="Basham D."/>
            <person name="Bowman S."/>
            <person name="Brooks K."/>
            <person name="Brown D."/>
            <person name="Brown S."/>
            <person name="Chillingworth T."/>
            <person name="Churcher C.M."/>
            <person name="Collins M."/>
            <person name="Connor R."/>
            <person name="Cronin A."/>
            <person name="Davis P."/>
            <person name="Feltwell T."/>
            <person name="Fraser A."/>
            <person name="Gentles S."/>
            <person name="Goble A."/>
            <person name="Hamlin N."/>
            <person name="Harris D.E."/>
            <person name="Hidalgo J."/>
            <person name="Hodgson G."/>
            <person name="Holroyd S."/>
            <person name="Hornsby T."/>
            <person name="Howarth S."/>
            <person name="Huckle E.J."/>
            <person name="Hunt S."/>
            <person name="Jagels K."/>
            <person name="James K.D."/>
            <person name="Jones L."/>
            <person name="Jones M."/>
            <person name="Leather S."/>
            <person name="McDonald S."/>
            <person name="McLean J."/>
            <person name="Mooney P."/>
            <person name="Moule S."/>
            <person name="Mungall K.L."/>
            <person name="Murphy L.D."/>
            <person name="Niblett D."/>
            <person name="Odell C."/>
            <person name="Oliver K."/>
            <person name="O'Neil S."/>
            <person name="Pearson D."/>
            <person name="Quail M.A."/>
            <person name="Rabbinowitsch E."/>
            <person name="Rutherford K.M."/>
            <person name="Rutter S."/>
            <person name="Saunders D."/>
            <person name="Seeger K."/>
            <person name="Sharp S."/>
            <person name="Skelton J."/>
            <person name="Simmonds M.N."/>
            <person name="Squares R."/>
            <person name="Squares S."/>
            <person name="Stevens K."/>
            <person name="Taylor K."/>
            <person name="Taylor R.G."/>
            <person name="Tivey A."/>
            <person name="Walsh S.V."/>
            <person name="Warren T."/>
            <person name="Whitehead S."/>
            <person name="Woodward J.R."/>
            <person name="Volckaert G."/>
            <person name="Aert R."/>
            <person name="Robben J."/>
            <person name="Grymonprez B."/>
            <person name="Weltjens I."/>
            <person name="Vanstreels E."/>
            <person name="Rieger M."/>
            <person name="Schaefer M."/>
            <person name="Mueller-Auer S."/>
            <person name="Gabel C."/>
            <person name="Fuchs M."/>
            <person name="Duesterhoeft A."/>
            <person name="Fritzc C."/>
            <person name="Holzer E."/>
            <person name="Moestl D."/>
            <person name="Hilbert H."/>
            <person name="Borzym K."/>
            <person name="Langer I."/>
            <person name="Beck A."/>
            <person name="Lehrach H."/>
            <person name="Reinhardt R."/>
            <person name="Pohl T.M."/>
            <person name="Eger P."/>
            <person name="Zimmermann W."/>
            <person name="Wedler H."/>
            <person name="Wambutt R."/>
            <person name="Purnelle B."/>
            <person name="Goffeau A."/>
            <person name="Cadieu E."/>
            <person name="Dreano S."/>
            <person name="Gloux S."/>
            <person name="Lelaure V."/>
            <person name="Mottier S."/>
            <person name="Galibert F."/>
            <person name="Aves S.J."/>
            <person name="Xiang Z."/>
            <person name="Hunt C."/>
            <person name="Moore K."/>
            <person name="Hurst S.M."/>
            <person name="Lucas M."/>
            <person name="Rochet M."/>
            <person name="Gaillardin C."/>
            <person name="Tallada V.A."/>
            <person name="Garzon A."/>
            <person name="Thode G."/>
            <person name="Daga R.R."/>
            <person name="Cruzado L."/>
            <person name="Jimenez J."/>
            <person name="Sanchez M."/>
            <person name="del Rey F."/>
            <person name="Benito J."/>
            <person name="Dominguez A."/>
            <person name="Revuelta J.L."/>
            <person name="Moreno S."/>
            <person name="Armstrong J."/>
            <person name="Forsburg S.L."/>
            <person name="Cerutti L."/>
            <person name="Lowe T."/>
            <person name="McCombie W.R."/>
            <person name="Paulsen I."/>
            <person name="Potashkin J."/>
            <person name="Shpakovski G.V."/>
            <person name="Ussery D."/>
            <person name="Barrell B.G."/>
            <person name="Nurse P."/>
        </authorList>
    </citation>
    <scope>NUCLEOTIDE SEQUENCE [LARGE SCALE GENOMIC DNA]</scope>
    <source>
        <strain>972 / ATCC 24843</strain>
    </source>
</reference>
<reference key="5">
    <citation type="journal article" date="1992" name="J. Biol. Chem.">
        <title>Post-translational processing of Schizosaccharomyces pombe YPT proteins.</title>
        <authorList>
            <person name="Newman C.M."/>
            <person name="Giannakouros T."/>
            <person name="Hancock J.F."/>
            <person name="Fawell E.H."/>
            <person name="Armstrong J."/>
            <person name="Magee A.I."/>
        </authorList>
    </citation>
    <scope>ISOPRENYLATION AT CYS-213 AND CYS-214</scope>
</reference>
<reference key="6">
    <citation type="journal article" date="2006" name="Genes Cells">
        <title>Genetic and functional interaction between Ryh1 and Ypt3: two Rab GTPases that function in S. pombe secretory pathway.</title>
        <authorList>
            <person name="He Y."/>
            <person name="Sugiura R."/>
            <person name="Ma Y."/>
            <person name="Kita A."/>
            <person name="Deng L."/>
            <person name="Takegawa K."/>
            <person name="Matsuoka K."/>
            <person name="Shuntoh H."/>
            <person name="Kuno T."/>
        </authorList>
    </citation>
    <scope>FUNCTION</scope>
    <scope>SUBCELLULAR LOCATION</scope>
</reference>
<reference key="7">
    <citation type="journal article" date="2006" name="Nat. Biotechnol.">
        <title>ORFeome cloning and global analysis of protein localization in the fission yeast Schizosaccharomyces pombe.</title>
        <authorList>
            <person name="Matsuyama A."/>
            <person name="Arai R."/>
            <person name="Yashiroda Y."/>
            <person name="Shirai A."/>
            <person name="Kamata A."/>
            <person name="Sekido S."/>
            <person name="Kobayashi Y."/>
            <person name="Hashimoto A."/>
            <person name="Hamamoto M."/>
            <person name="Hiraoka Y."/>
            <person name="Horinouchi S."/>
            <person name="Yoshida M."/>
        </authorList>
    </citation>
    <scope>SUBCELLULAR LOCATION [LARGE SCALE ANALYSIS]</scope>
</reference>
<reference key="8">
    <citation type="journal article" date="2008" name="J. Proteome Res.">
        <title>Phosphoproteome analysis of fission yeast.</title>
        <authorList>
            <person name="Wilson-Grady J.T."/>
            <person name="Villen J."/>
            <person name="Gygi S.P."/>
        </authorList>
    </citation>
    <scope>PHOSPHORYLATION [LARGE SCALE ANALYSIS] AT THR-42</scope>
    <scope>IDENTIFICATION BY MASS SPECTROMETRY</scope>
</reference>
<evidence type="ECO:0000250" key="1"/>
<evidence type="ECO:0000269" key="2">
    <source>
    </source>
</evidence>
<evidence type="ECO:0000269" key="3">
    <source>
    </source>
</evidence>
<evidence type="ECO:0000269" key="4">
    <source>
    </source>
</evidence>
<evidence type="ECO:0000269" key="5">
    <source>
    </source>
</evidence>
<evidence type="ECO:0000269" key="6">
    <source>
    </source>
</evidence>
<evidence type="ECO:0000305" key="7"/>
<evidence type="ECO:0000305" key="8">
    <source>
    </source>
</evidence>
<protein>
    <recommendedName>
        <fullName>GTP-binding protein ypt3</fullName>
    </recommendedName>
    <alternativeName>
        <fullName>RAB</fullName>
    </alternativeName>
</protein>
<organism>
    <name type="scientific">Schizosaccharomyces pombe (strain 972 / ATCC 24843)</name>
    <name type="common">Fission yeast</name>
    <dbReference type="NCBI Taxonomy" id="284812"/>
    <lineage>
        <taxon>Eukaryota</taxon>
        <taxon>Fungi</taxon>
        <taxon>Dikarya</taxon>
        <taxon>Ascomycota</taxon>
        <taxon>Taphrinomycotina</taxon>
        <taxon>Schizosaccharomycetes</taxon>
        <taxon>Schizosaccharomycetales</taxon>
        <taxon>Schizosaccharomycetaceae</taxon>
        <taxon>Schizosaccharomyces</taxon>
    </lineage>
</organism>
<gene>
    <name type="primary">ypt3</name>
    <name type="synonym">its5</name>
    <name type="ORF">SPAC18G6.03</name>
</gene>